<dbReference type="EC" id="1.97.1.12" evidence="1"/>
<dbReference type="EMBL" id="AB002583">
    <property type="protein sequence ID" value="BAC76206.1"/>
    <property type="molecule type" value="Genomic_DNA"/>
</dbReference>
<dbReference type="RefSeq" id="NP_849044.1">
    <property type="nucleotide sequence ID" value="NC_004799.1"/>
</dbReference>
<dbReference type="PDB" id="5ZGB">
    <property type="method" value="EM"/>
    <property type="resolution" value="3.63 A"/>
    <property type="chains" value="A=1-748"/>
</dbReference>
<dbReference type="PDB" id="5ZGH">
    <property type="method" value="EM"/>
    <property type="resolution" value="3.82 A"/>
    <property type="chains" value="A=1-748"/>
</dbReference>
<dbReference type="PDB" id="6FOS">
    <property type="method" value="X-ray"/>
    <property type="resolution" value="4.00 A"/>
    <property type="chains" value="A=9-748"/>
</dbReference>
<dbReference type="PDB" id="7BLZ">
    <property type="method" value="EM"/>
    <property type="resolution" value="3.10 A"/>
    <property type="chains" value="A=6-748"/>
</dbReference>
<dbReference type="PDBsum" id="5ZGB"/>
<dbReference type="PDBsum" id="5ZGH"/>
<dbReference type="PDBsum" id="6FOS"/>
<dbReference type="PDBsum" id="7BLZ"/>
<dbReference type="EMDB" id="EMD-12228"/>
<dbReference type="EMDB" id="EMD-6929"/>
<dbReference type="SMR" id="Q85FY7"/>
<dbReference type="STRING" id="280699.Q85FY7"/>
<dbReference type="EnsemblPlants" id="CMV135CT">
    <property type="protein sequence ID" value="CMV135CT"/>
    <property type="gene ID" value="CMV135C"/>
</dbReference>
<dbReference type="GeneID" id="844935"/>
<dbReference type="Gramene" id="CMV135CT">
    <property type="protein sequence ID" value="CMV135CT"/>
    <property type="gene ID" value="CMV135C"/>
</dbReference>
<dbReference type="KEGG" id="cme:CymeCp112"/>
<dbReference type="eggNOG" id="ENOG502QRYE">
    <property type="taxonomic scope" value="Eukaryota"/>
</dbReference>
<dbReference type="HOGENOM" id="CLU_016126_1_0_1"/>
<dbReference type="Proteomes" id="UP000007014">
    <property type="component" value="Chloroplast"/>
</dbReference>
<dbReference type="GO" id="GO:0009535">
    <property type="term" value="C:chloroplast thylakoid membrane"/>
    <property type="evidence" value="ECO:0007669"/>
    <property type="project" value="UniProtKB-SubCell"/>
</dbReference>
<dbReference type="GO" id="GO:0009522">
    <property type="term" value="C:photosystem I"/>
    <property type="evidence" value="ECO:0007669"/>
    <property type="project" value="UniProtKB-KW"/>
</dbReference>
<dbReference type="GO" id="GO:0051539">
    <property type="term" value="F:4 iron, 4 sulfur cluster binding"/>
    <property type="evidence" value="ECO:0007669"/>
    <property type="project" value="UniProtKB-KW"/>
</dbReference>
<dbReference type="GO" id="GO:0016168">
    <property type="term" value="F:chlorophyll binding"/>
    <property type="evidence" value="ECO:0007669"/>
    <property type="project" value="UniProtKB-KW"/>
</dbReference>
<dbReference type="GO" id="GO:0009055">
    <property type="term" value="F:electron transfer activity"/>
    <property type="evidence" value="ECO:0007669"/>
    <property type="project" value="UniProtKB-UniRule"/>
</dbReference>
<dbReference type="GO" id="GO:0000287">
    <property type="term" value="F:magnesium ion binding"/>
    <property type="evidence" value="ECO:0007669"/>
    <property type="project" value="UniProtKB-UniRule"/>
</dbReference>
<dbReference type="GO" id="GO:0016491">
    <property type="term" value="F:oxidoreductase activity"/>
    <property type="evidence" value="ECO:0007669"/>
    <property type="project" value="UniProtKB-KW"/>
</dbReference>
<dbReference type="GO" id="GO:0015979">
    <property type="term" value="P:photosynthesis"/>
    <property type="evidence" value="ECO:0007669"/>
    <property type="project" value="UniProtKB-UniRule"/>
</dbReference>
<dbReference type="Gene3D" id="1.20.1130.10">
    <property type="entry name" value="Photosystem I PsaA/PsaB"/>
    <property type="match status" value="1"/>
</dbReference>
<dbReference type="HAMAP" id="MF_00458">
    <property type="entry name" value="PSI_PsaA"/>
    <property type="match status" value="1"/>
</dbReference>
<dbReference type="InterPro" id="IPR006243">
    <property type="entry name" value="PSI_PsaA"/>
</dbReference>
<dbReference type="InterPro" id="IPR001280">
    <property type="entry name" value="PSI_PsaA/B"/>
</dbReference>
<dbReference type="InterPro" id="IPR020586">
    <property type="entry name" value="PSI_PsaA/B_CS"/>
</dbReference>
<dbReference type="InterPro" id="IPR036408">
    <property type="entry name" value="PSI_PsaA/B_sf"/>
</dbReference>
<dbReference type="NCBIfam" id="TIGR01335">
    <property type="entry name" value="psaA"/>
    <property type="match status" value="1"/>
</dbReference>
<dbReference type="PANTHER" id="PTHR30128">
    <property type="entry name" value="OUTER MEMBRANE PROTEIN, OMPA-RELATED"/>
    <property type="match status" value="1"/>
</dbReference>
<dbReference type="PANTHER" id="PTHR30128:SF19">
    <property type="entry name" value="PHOTOSYSTEM I P700 CHLOROPHYLL A APOPROTEIN A1-RELATED"/>
    <property type="match status" value="1"/>
</dbReference>
<dbReference type="Pfam" id="PF00223">
    <property type="entry name" value="PsaA_PsaB"/>
    <property type="match status" value="1"/>
</dbReference>
<dbReference type="PIRSF" id="PIRSF002905">
    <property type="entry name" value="PSI_A"/>
    <property type="match status" value="1"/>
</dbReference>
<dbReference type="PRINTS" id="PR00257">
    <property type="entry name" value="PHOTSYSPSAAB"/>
</dbReference>
<dbReference type="SUPFAM" id="SSF81558">
    <property type="entry name" value="Photosystem I subunits PsaA/PsaB"/>
    <property type="match status" value="1"/>
</dbReference>
<dbReference type="PROSITE" id="PS00419">
    <property type="entry name" value="PHOTOSYSTEM_I_PSAAB"/>
    <property type="match status" value="1"/>
</dbReference>
<feature type="chain" id="PRO_0000088542" description="Photosystem I P700 chlorophyll a apoprotein A1">
    <location>
        <begin position="1"/>
        <end position="748"/>
    </location>
</feature>
<feature type="transmembrane region" description="Helical; Name=I" evidence="1">
    <location>
        <begin position="69"/>
        <end position="92"/>
    </location>
</feature>
<feature type="transmembrane region" description="Helical; Name=II" evidence="1">
    <location>
        <begin position="155"/>
        <end position="178"/>
    </location>
</feature>
<feature type="transmembrane region" description="Helical; Name=III" evidence="1">
    <location>
        <begin position="194"/>
        <end position="218"/>
    </location>
</feature>
<feature type="transmembrane region" description="Helical; Name=IV" evidence="1">
    <location>
        <begin position="290"/>
        <end position="308"/>
    </location>
</feature>
<feature type="transmembrane region" description="Helical; Name=V" evidence="1">
    <location>
        <begin position="345"/>
        <end position="368"/>
    </location>
</feature>
<feature type="transmembrane region" description="Helical; Name=VI" evidence="1">
    <location>
        <begin position="384"/>
        <end position="410"/>
    </location>
</feature>
<feature type="transmembrane region" description="Helical; Name=VII" evidence="1">
    <location>
        <begin position="432"/>
        <end position="454"/>
    </location>
</feature>
<feature type="transmembrane region" description="Helical; Name=VIII" evidence="1">
    <location>
        <begin position="529"/>
        <end position="547"/>
    </location>
</feature>
<feature type="transmembrane region" description="Helical; Name=IX" evidence="1">
    <location>
        <begin position="587"/>
        <end position="608"/>
    </location>
</feature>
<feature type="transmembrane region" description="Helical; Name=X" evidence="1">
    <location>
        <begin position="662"/>
        <end position="684"/>
    </location>
</feature>
<feature type="transmembrane region" description="Helical; Name=XI" evidence="1">
    <location>
        <begin position="722"/>
        <end position="742"/>
    </location>
</feature>
<feature type="binding site" evidence="1">
    <location>
        <position position="571"/>
    </location>
    <ligand>
        <name>[4Fe-4S] cluster</name>
        <dbReference type="ChEBI" id="CHEBI:49883"/>
        <note>ligand shared between dimeric partners</note>
    </ligand>
</feature>
<feature type="binding site" evidence="1">
    <location>
        <position position="580"/>
    </location>
    <ligand>
        <name>[4Fe-4S] cluster</name>
        <dbReference type="ChEBI" id="CHEBI:49883"/>
        <note>ligand shared between dimeric partners</note>
    </ligand>
</feature>
<feature type="binding site" description="axial binding residue" evidence="1">
    <location>
        <position position="673"/>
    </location>
    <ligand>
        <name>chlorophyll a'</name>
        <dbReference type="ChEBI" id="CHEBI:189419"/>
        <label>A1</label>
    </ligand>
    <ligandPart>
        <name>Mg</name>
        <dbReference type="ChEBI" id="CHEBI:25107"/>
    </ligandPart>
</feature>
<feature type="binding site" description="axial binding residue" evidence="1">
    <location>
        <position position="681"/>
    </location>
    <ligand>
        <name>chlorophyll a</name>
        <dbReference type="ChEBI" id="CHEBI:58416"/>
        <label>A3</label>
    </ligand>
    <ligandPart>
        <name>Mg</name>
        <dbReference type="ChEBI" id="CHEBI:25107"/>
    </ligandPart>
</feature>
<feature type="binding site" evidence="1">
    <location>
        <position position="689"/>
    </location>
    <ligand>
        <name>chlorophyll a</name>
        <dbReference type="ChEBI" id="CHEBI:58416"/>
        <label>A3</label>
    </ligand>
</feature>
<feature type="binding site" evidence="1">
    <location>
        <position position="690"/>
    </location>
    <ligand>
        <name>phylloquinone</name>
        <dbReference type="ChEBI" id="CHEBI:18067"/>
        <label>A</label>
    </ligand>
</feature>
<feature type="strand" evidence="2">
    <location>
        <begin position="13"/>
        <end position="15"/>
    </location>
</feature>
<feature type="helix" evidence="2">
    <location>
        <begin position="23"/>
        <end position="26"/>
    </location>
</feature>
<feature type="turn" evidence="2">
    <location>
        <begin position="28"/>
        <end position="31"/>
    </location>
</feature>
<feature type="helix" evidence="2">
    <location>
        <begin position="35"/>
        <end position="37"/>
    </location>
</feature>
<feature type="helix" evidence="2">
    <location>
        <begin position="43"/>
        <end position="50"/>
    </location>
</feature>
<feature type="helix" evidence="2">
    <location>
        <begin position="55"/>
        <end position="58"/>
    </location>
</feature>
<feature type="helix" evidence="2">
    <location>
        <begin position="62"/>
        <end position="93"/>
    </location>
</feature>
<feature type="helix" evidence="2">
    <location>
        <begin position="97"/>
        <end position="102"/>
    </location>
</feature>
<feature type="turn" evidence="2">
    <location>
        <begin position="104"/>
        <end position="106"/>
    </location>
</feature>
<feature type="strand" evidence="2">
    <location>
        <begin position="110"/>
        <end position="112"/>
    </location>
</feature>
<feature type="strand" evidence="2">
    <location>
        <begin position="116"/>
        <end position="119"/>
    </location>
</feature>
<feature type="helix" evidence="2">
    <location>
        <begin position="120"/>
        <end position="123"/>
    </location>
</feature>
<feature type="strand" evidence="2">
    <location>
        <begin position="128"/>
        <end position="130"/>
    </location>
</feature>
<feature type="strand" evidence="2">
    <location>
        <begin position="133"/>
        <end position="135"/>
    </location>
</feature>
<feature type="helix" evidence="2">
    <location>
        <begin position="140"/>
        <end position="146"/>
    </location>
</feature>
<feature type="helix" evidence="2">
    <location>
        <begin position="152"/>
        <end position="178"/>
    </location>
</feature>
<feature type="strand" evidence="2">
    <location>
        <begin position="180"/>
        <end position="182"/>
    </location>
</feature>
<feature type="turn" evidence="2">
    <location>
        <begin position="184"/>
        <end position="187"/>
    </location>
</feature>
<feature type="helix" evidence="2">
    <location>
        <begin position="190"/>
        <end position="199"/>
    </location>
</feature>
<feature type="turn" evidence="2">
    <location>
        <begin position="200"/>
        <end position="202"/>
    </location>
</feature>
<feature type="helix" evidence="2">
    <location>
        <begin position="203"/>
        <end position="215"/>
    </location>
</feature>
<feature type="helix" evidence="2">
    <location>
        <begin position="217"/>
        <end position="224"/>
    </location>
</feature>
<feature type="turn" evidence="2">
    <location>
        <begin position="225"/>
        <end position="227"/>
    </location>
</feature>
<feature type="turn" evidence="2">
    <location>
        <begin position="230"/>
        <end position="232"/>
    </location>
</feature>
<feature type="helix" evidence="2">
    <location>
        <begin position="236"/>
        <end position="241"/>
    </location>
</feature>
<feature type="helix" evidence="2">
    <location>
        <begin position="243"/>
        <end position="249"/>
    </location>
</feature>
<feature type="helix" evidence="2">
    <location>
        <begin position="252"/>
        <end position="255"/>
    </location>
</feature>
<feature type="helix" evidence="2">
    <location>
        <begin position="258"/>
        <end position="261"/>
    </location>
</feature>
<feature type="helix" evidence="2">
    <location>
        <begin position="265"/>
        <end position="268"/>
    </location>
</feature>
<feature type="turn" evidence="2">
    <location>
        <begin position="269"/>
        <end position="271"/>
    </location>
</feature>
<feature type="turn" evidence="2">
    <location>
        <begin position="280"/>
        <end position="282"/>
    </location>
</feature>
<feature type="strand" evidence="2">
    <location>
        <begin position="283"/>
        <end position="285"/>
    </location>
</feature>
<feature type="helix" evidence="2">
    <location>
        <begin position="287"/>
        <end position="304"/>
    </location>
</feature>
<feature type="strand" evidence="2">
    <location>
        <begin position="311"/>
        <end position="315"/>
    </location>
</feature>
<feature type="helix" evidence="2">
    <location>
        <begin position="318"/>
        <end position="324"/>
    </location>
</feature>
<feature type="strand" evidence="2">
    <location>
        <begin position="330"/>
        <end position="332"/>
    </location>
</feature>
<feature type="turn" evidence="2">
    <location>
        <begin position="333"/>
        <end position="336"/>
    </location>
</feature>
<feature type="helix" evidence="2">
    <location>
        <begin position="337"/>
        <end position="343"/>
    </location>
</feature>
<feature type="helix" evidence="2">
    <location>
        <begin position="345"/>
        <end position="369"/>
    </location>
</feature>
<feature type="turn" evidence="2">
    <location>
        <begin position="374"/>
        <end position="378"/>
    </location>
</feature>
<feature type="helix" evidence="2">
    <location>
        <begin position="380"/>
        <end position="411"/>
    </location>
</feature>
<feature type="turn" evidence="2">
    <location>
        <begin position="415"/>
        <end position="417"/>
    </location>
</feature>
<feature type="strand" evidence="2">
    <location>
        <begin position="418"/>
        <end position="421"/>
    </location>
</feature>
<feature type="helix" evidence="2">
    <location>
        <begin position="422"/>
        <end position="428"/>
    </location>
</feature>
<feature type="helix" evidence="2">
    <location>
        <begin position="430"/>
        <end position="460"/>
    </location>
</feature>
<feature type="helix" evidence="2">
    <location>
        <begin position="464"/>
        <end position="466"/>
    </location>
</feature>
<feature type="strand" evidence="2">
    <location>
        <begin position="467"/>
        <end position="473"/>
    </location>
</feature>
<feature type="helix" evidence="2">
    <location>
        <begin position="478"/>
        <end position="493"/>
    </location>
</feature>
<feature type="turn" evidence="2">
    <location>
        <begin position="504"/>
        <end position="506"/>
    </location>
</feature>
<feature type="strand" evidence="2">
    <location>
        <begin position="511"/>
        <end position="519"/>
    </location>
</feature>
<feature type="helix" evidence="2">
    <location>
        <begin position="526"/>
        <end position="551"/>
    </location>
</feature>
<feature type="helix" evidence="2">
    <location>
        <begin position="562"/>
        <end position="565"/>
    </location>
</feature>
<feature type="helix" evidence="2">
    <location>
        <begin position="584"/>
        <end position="613"/>
    </location>
</feature>
<feature type="strand" evidence="2">
    <location>
        <begin position="615"/>
        <end position="618"/>
    </location>
</feature>
<feature type="helix" evidence="2">
    <location>
        <begin position="620"/>
        <end position="622"/>
    </location>
</feature>
<feature type="strand" evidence="2">
    <location>
        <begin position="624"/>
        <end position="626"/>
    </location>
</feature>
<feature type="turn" evidence="2">
    <location>
        <begin position="627"/>
        <end position="630"/>
    </location>
</feature>
<feature type="helix" evidence="2">
    <location>
        <begin position="631"/>
        <end position="635"/>
    </location>
</feature>
<feature type="helix" evidence="2">
    <location>
        <begin position="639"/>
        <end position="644"/>
    </location>
</feature>
<feature type="turn" evidence="2">
    <location>
        <begin position="645"/>
        <end position="651"/>
    </location>
</feature>
<feature type="helix" evidence="2">
    <location>
        <begin position="652"/>
        <end position="655"/>
    </location>
</feature>
<feature type="helix" evidence="2">
    <location>
        <begin position="663"/>
        <end position="683"/>
    </location>
</feature>
<feature type="helix" evidence="2">
    <location>
        <begin position="687"/>
        <end position="702"/>
    </location>
</feature>
<feature type="turn" evidence="2">
    <location>
        <begin position="703"/>
        <end position="705"/>
    </location>
</feature>
<feature type="strand" evidence="2">
    <location>
        <begin position="709"/>
        <end position="711"/>
    </location>
</feature>
<feature type="helix" evidence="2">
    <location>
        <begin position="717"/>
        <end position="746"/>
    </location>
</feature>
<protein>
    <recommendedName>
        <fullName evidence="1">Photosystem I P700 chlorophyll a apoprotein A1</fullName>
        <ecNumber evidence="1">1.97.1.12</ecNumber>
    </recommendedName>
    <alternativeName>
        <fullName evidence="1">PSI-A</fullName>
    </alternativeName>
    <alternativeName>
        <fullName evidence="1">PsaA</fullName>
    </alternativeName>
</protein>
<reference key="1">
    <citation type="journal article" date="2003" name="DNA Res.">
        <title>Complete sequence and analysis of the plastid genome of the unicellular red alga Cyanidioschyzon merolae.</title>
        <authorList>
            <person name="Ohta N."/>
            <person name="Matsuzaki M."/>
            <person name="Misumi O."/>
            <person name="Miyagishima S.-Y."/>
            <person name="Nozaki H."/>
            <person name="Tanaka K."/>
            <person name="Shin-i T."/>
            <person name="Kohara Y."/>
            <person name="Kuroiwa T."/>
        </authorList>
    </citation>
    <scope>NUCLEOTIDE SEQUENCE [LARGE SCALE GENOMIC DNA]</scope>
    <source>
        <strain>NIES-3377 / 10D</strain>
    </source>
</reference>
<accession>Q85FY7</accession>
<geneLocation type="chloroplast"/>
<evidence type="ECO:0000255" key="1">
    <source>
        <dbReference type="HAMAP-Rule" id="MF_00458"/>
    </source>
</evidence>
<evidence type="ECO:0007829" key="2">
    <source>
        <dbReference type="PDB" id="7BLZ"/>
    </source>
</evidence>
<proteinExistence type="evidence at protein level"/>
<sequence>MTLTTEKQVKVVVDRDVVPTSFEKWAKPGHFSRSLAKGPKTTTWIWNLHADAHDFDSHTSSLEEVSRKIFSAHFGQLAIIFIWLSGMYFHGARFSNYVAWLSNPTGIKPSAQVVWPIVGQQILNADVGGGMQGIQITSGLFQLWRASGIVNELQLYVTALGGLGMAGLMIFAGWFHYHKAAPKLEWFQNVESMLNHHLAGLLGLGSLSWAGHQIHVSLPINKLLDAGVAPSSIPLPHEFILNRNLMAELYPSFQQGLVPFFTLNWKQYSDILTFKGGLSPVTGGLWLTDVAHHHLAIAVLFLVAGHMYRTNWGIGHSIKQILEAHKGPLTGEGHKGLYEILTTSWHANLAINLAMLGSLSIIVAHHMYAMPPYPYLATDYPTQLSLFTHHMWIGGFCIVGAGAHAAIYMVRDYSPTVNFNNVLDRMIRHRDAIISHLNWVCIFLGMHSFGLYIHNDTMRALGRAQDMFSDTAIQLQPVFAQWIQQIHTLAPGNTAVNALATASYAFGADTVTVGSKIAMMPIKLGTADFMVHHIHAFTIHVTTLILLKGVLYARNSRLIPDKANLGFRFPCDGPGRGGTCQVSAWDHVFLGLFWMYNALSIVIFHFSWKMQSDVWGTVTSNGAISHITGGNFAQSAITINGWLRDFLWAQASQVIQSYGSSLSAYGLMFLGAHFVWAFSLMFLFSGRGYWQELIESIVWAHNKLKVAPAIAPRALSITQGRAVGVAHYLLGGIATTWAFFLARIIAVG</sequence>
<keyword id="KW-0002">3D-structure</keyword>
<keyword id="KW-0004">4Fe-4S</keyword>
<keyword id="KW-0148">Chlorophyll</keyword>
<keyword id="KW-0150">Chloroplast</keyword>
<keyword id="KW-0157">Chromophore</keyword>
<keyword id="KW-0249">Electron transport</keyword>
<keyword id="KW-0408">Iron</keyword>
<keyword id="KW-0411">Iron-sulfur</keyword>
<keyword id="KW-0460">Magnesium</keyword>
<keyword id="KW-0472">Membrane</keyword>
<keyword id="KW-0479">Metal-binding</keyword>
<keyword id="KW-0560">Oxidoreductase</keyword>
<keyword id="KW-0602">Photosynthesis</keyword>
<keyword id="KW-0603">Photosystem I</keyword>
<keyword id="KW-0934">Plastid</keyword>
<keyword id="KW-1185">Reference proteome</keyword>
<keyword id="KW-0793">Thylakoid</keyword>
<keyword id="KW-0812">Transmembrane</keyword>
<keyword id="KW-1133">Transmembrane helix</keyword>
<keyword id="KW-0813">Transport</keyword>
<organism>
    <name type="scientific">Cyanidioschyzon merolae (strain NIES-3377 / 10D)</name>
    <name type="common">Unicellular red alga</name>
    <dbReference type="NCBI Taxonomy" id="280699"/>
    <lineage>
        <taxon>Eukaryota</taxon>
        <taxon>Rhodophyta</taxon>
        <taxon>Bangiophyceae</taxon>
        <taxon>Cyanidiales</taxon>
        <taxon>Cyanidiaceae</taxon>
        <taxon>Cyanidioschyzon</taxon>
    </lineage>
</organism>
<gene>
    <name evidence="1" type="primary">psaA</name>
</gene>
<name>PSAA_CYAM1</name>
<comment type="function">
    <text>PsaA and PsaB bind P700, the primary electron donor of photosystem I (PSI), as well as the electron acceptors A0, A1 and FX. PSI is a plastocyanin/cytochrome c6-ferredoxin oxidoreductase, converting photonic excitation into a charge separation, which transfers an electron from the donor P700 chlorophyll pair to the spectroscopically characterized acceptors A0, A1, FX, FA and FB in turn. Oxidized P700 is reduced on the lumenal side of the thylakoid membrane by plastocyanin or cytochrome c6.</text>
</comment>
<comment type="catalytic activity">
    <reaction evidence="1">
        <text>reduced [plastocyanin] + hnu + oxidized [2Fe-2S]-[ferredoxin] = oxidized [plastocyanin] + reduced [2Fe-2S]-[ferredoxin]</text>
        <dbReference type="Rhea" id="RHEA:30407"/>
        <dbReference type="Rhea" id="RHEA-COMP:10000"/>
        <dbReference type="Rhea" id="RHEA-COMP:10001"/>
        <dbReference type="Rhea" id="RHEA-COMP:10039"/>
        <dbReference type="Rhea" id="RHEA-COMP:10040"/>
        <dbReference type="ChEBI" id="CHEBI:29036"/>
        <dbReference type="ChEBI" id="CHEBI:30212"/>
        <dbReference type="ChEBI" id="CHEBI:33737"/>
        <dbReference type="ChEBI" id="CHEBI:33738"/>
        <dbReference type="ChEBI" id="CHEBI:49552"/>
        <dbReference type="EC" id="1.97.1.12"/>
    </reaction>
</comment>
<comment type="cofactor">
    <text evidence="1">P700 is a chlorophyll a/chlorophyll a' dimer, A0 is one or more chlorophyll a, A1 is one or both phylloquinones and FX is a shared 4Fe-4S iron-sulfur center.</text>
</comment>
<comment type="subunit">
    <text evidence="1">The PsaA/B heterodimer binds the P700 chlorophyll special pair and subsequent electron acceptors. PSI consists of a core antenna complex that captures photons, and an electron transfer chain that converts photonic excitation into a charge separation. The eukaryotic PSI reaction center is composed of at least 11 subunits.</text>
</comment>
<comment type="subcellular location">
    <subcellularLocation>
        <location>Plastid</location>
        <location>Chloroplast thylakoid membrane</location>
        <topology>Multi-pass membrane protein</topology>
    </subcellularLocation>
</comment>
<comment type="similarity">
    <text evidence="1">Belongs to the PsaA/PsaB family.</text>
</comment>